<keyword id="KW-0963">Cytoplasm</keyword>
<keyword id="KW-0269">Exonuclease</keyword>
<keyword id="KW-0378">Hydrolase</keyword>
<keyword id="KW-0540">Nuclease</keyword>
<keyword id="KW-0694">RNA-binding</keyword>
<accession>A9R8T9</accession>
<protein>
    <recommendedName>
        <fullName evidence="2">Exoribonuclease 2</fullName>
        <ecNumber evidence="2">3.1.13.1</ecNumber>
    </recommendedName>
    <alternativeName>
        <fullName evidence="2">Exoribonuclease II</fullName>
        <shortName evidence="2">RNase II</shortName>
        <shortName evidence="2">Ribonuclease II</shortName>
    </alternativeName>
</protein>
<proteinExistence type="inferred from homology"/>
<gene>
    <name evidence="2" type="primary">rnb</name>
    <name type="ordered locus">YpAngola_A2244</name>
</gene>
<feature type="chain" id="PRO_1000135883" description="Exoribonuclease 2">
    <location>
        <begin position="1"/>
        <end position="644"/>
    </location>
</feature>
<feature type="domain" description="RNB" evidence="1">
    <location>
        <begin position="189"/>
        <end position="516"/>
    </location>
</feature>
<feature type="domain" description="S1 motif" evidence="2">
    <location>
        <begin position="561"/>
        <end position="643"/>
    </location>
</feature>
<dbReference type="EC" id="3.1.13.1" evidence="2"/>
<dbReference type="EMBL" id="CP000901">
    <property type="protein sequence ID" value="ABX88295.1"/>
    <property type="molecule type" value="Genomic_DNA"/>
</dbReference>
<dbReference type="RefSeq" id="WP_002210605.1">
    <property type="nucleotide sequence ID" value="NZ_CP009935.1"/>
</dbReference>
<dbReference type="SMR" id="A9R8T9"/>
<dbReference type="KEGG" id="ypg:YpAngola_A2244"/>
<dbReference type="PATRIC" id="fig|349746.12.peg.3248"/>
<dbReference type="GO" id="GO:0005829">
    <property type="term" value="C:cytosol"/>
    <property type="evidence" value="ECO:0007669"/>
    <property type="project" value="UniProtKB-ARBA"/>
</dbReference>
<dbReference type="GO" id="GO:0008859">
    <property type="term" value="F:exoribonuclease II activity"/>
    <property type="evidence" value="ECO:0007669"/>
    <property type="project" value="UniProtKB-UniRule"/>
</dbReference>
<dbReference type="GO" id="GO:0003723">
    <property type="term" value="F:RNA binding"/>
    <property type="evidence" value="ECO:0007669"/>
    <property type="project" value="UniProtKB-KW"/>
</dbReference>
<dbReference type="GO" id="GO:0006402">
    <property type="term" value="P:mRNA catabolic process"/>
    <property type="evidence" value="ECO:0007669"/>
    <property type="project" value="UniProtKB-UniRule"/>
</dbReference>
<dbReference type="FunFam" id="2.40.50.140:FF:000079">
    <property type="entry name" value="Exoribonuclease 2"/>
    <property type="match status" value="1"/>
</dbReference>
<dbReference type="Gene3D" id="2.40.50.640">
    <property type="match status" value="1"/>
</dbReference>
<dbReference type="Gene3D" id="2.40.50.140">
    <property type="entry name" value="Nucleic acid-binding proteins"/>
    <property type="match status" value="2"/>
</dbReference>
<dbReference type="HAMAP" id="MF_01036">
    <property type="entry name" value="RNase_II"/>
    <property type="match status" value="1"/>
</dbReference>
<dbReference type="InterPro" id="IPR011129">
    <property type="entry name" value="CSD"/>
</dbReference>
<dbReference type="InterPro" id="IPR012340">
    <property type="entry name" value="NA-bd_OB-fold"/>
</dbReference>
<dbReference type="InterPro" id="IPR013223">
    <property type="entry name" value="RNase_B_OB_dom"/>
</dbReference>
<dbReference type="InterPro" id="IPR011804">
    <property type="entry name" value="RNase_II"/>
</dbReference>
<dbReference type="InterPro" id="IPR001900">
    <property type="entry name" value="RNase_II/R"/>
</dbReference>
<dbReference type="InterPro" id="IPR022966">
    <property type="entry name" value="RNase_II/R_CS"/>
</dbReference>
<dbReference type="InterPro" id="IPR004476">
    <property type="entry name" value="RNase_II/RNase_R"/>
</dbReference>
<dbReference type="InterPro" id="IPR050180">
    <property type="entry name" value="RNR_Ribonuclease"/>
</dbReference>
<dbReference type="InterPro" id="IPR003029">
    <property type="entry name" value="S1_domain"/>
</dbReference>
<dbReference type="NCBIfam" id="TIGR00358">
    <property type="entry name" value="3_prime_RNase"/>
    <property type="match status" value="1"/>
</dbReference>
<dbReference type="NCBIfam" id="NF003455">
    <property type="entry name" value="PRK05054.1"/>
    <property type="match status" value="1"/>
</dbReference>
<dbReference type="NCBIfam" id="TIGR02062">
    <property type="entry name" value="RNase_B"/>
    <property type="match status" value="1"/>
</dbReference>
<dbReference type="PANTHER" id="PTHR23355:SF37">
    <property type="entry name" value="EXORIBONUCLEASE 2"/>
    <property type="match status" value="1"/>
</dbReference>
<dbReference type="PANTHER" id="PTHR23355">
    <property type="entry name" value="RIBONUCLEASE"/>
    <property type="match status" value="1"/>
</dbReference>
<dbReference type="Pfam" id="PF08206">
    <property type="entry name" value="OB_RNB"/>
    <property type="match status" value="1"/>
</dbReference>
<dbReference type="Pfam" id="PF00773">
    <property type="entry name" value="RNB"/>
    <property type="match status" value="1"/>
</dbReference>
<dbReference type="Pfam" id="PF00575">
    <property type="entry name" value="S1"/>
    <property type="match status" value="1"/>
</dbReference>
<dbReference type="SMART" id="SM00357">
    <property type="entry name" value="CSP"/>
    <property type="match status" value="1"/>
</dbReference>
<dbReference type="SMART" id="SM00955">
    <property type="entry name" value="RNB"/>
    <property type="match status" value="1"/>
</dbReference>
<dbReference type="SUPFAM" id="SSF50249">
    <property type="entry name" value="Nucleic acid-binding proteins"/>
    <property type="match status" value="4"/>
</dbReference>
<dbReference type="PROSITE" id="PS01175">
    <property type="entry name" value="RIBONUCLEASE_II"/>
    <property type="match status" value="1"/>
</dbReference>
<reference key="1">
    <citation type="journal article" date="2010" name="J. Bacteriol.">
        <title>Genome sequence of the deep-rooted Yersinia pestis strain Angola reveals new insights into the evolution and pangenome of the plague bacterium.</title>
        <authorList>
            <person name="Eppinger M."/>
            <person name="Worsham P.L."/>
            <person name="Nikolich M.P."/>
            <person name="Riley D.R."/>
            <person name="Sebastian Y."/>
            <person name="Mou S."/>
            <person name="Achtman M."/>
            <person name="Lindler L.E."/>
            <person name="Ravel J."/>
        </authorList>
    </citation>
    <scope>NUCLEOTIDE SEQUENCE [LARGE SCALE GENOMIC DNA]</scope>
    <source>
        <strain>Angola</strain>
    </source>
</reference>
<organism>
    <name type="scientific">Yersinia pestis bv. Antiqua (strain Angola)</name>
    <dbReference type="NCBI Taxonomy" id="349746"/>
    <lineage>
        <taxon>Bacteria</taxon>
        <taxon>Pseudomonadati</taxon>
        <taxon>Pseudomonadota</taxon>
        <taxon>Gammaproteobacteria</taxon>
        <taxon>Enterobacterales</taxon>
        <taxon>Yersiniaceae</taxon>
        <taxon>Yersinia</taxon>
    </lineage>
</organism>
<evidence type="ECO:0000255" key="1"/>
<evidence type="ECO:0000255" key="2">
    <source>
        <dbReference type="HAMAP-Rule" id="MF_01036"/>
    </source>
</evidence>
<sequence length="644" mass="72875">MFQDNPLLAQLKQQLHTQTPRVEGVVKGTEKGFGFLEVDGQKSYFIPPPQMKKVMHGDRIIATLHTDKDREIAEPETLVEPFLSRFVGRVQRKDDRLSIVPDHPLLRDAIQCRPVRELTHSFQNGDWAVAEMCRHPLKGDRAFQADLTAFITNGEDHFVPWWVTLARHNLEREAPAMVESALNDAELEREDLTALNFVTIDSASTEDMDDALFVQDNGDGSWLLTIAIADPTAYVVENSELDLTARKRAFTNYLPGFNIPMLPRDLSDNLCSLRPNERRPVLVCRVTITEEGTLSNDIRFSAAWVESKAKLVYDDVSDWLEGNNRWQPQDTAIAEQITLLKRICDARSNWRQQHALVFKDRPDYRFLLGEKGEVLDIIVEHRRIANRIVEECMIAANVCAALALREHLGFGIYNVHTGFDPALVEQAASVLKANGVGADPQALLTLPGFCELRRHLDALPTQFLDSRIRRFQTFAEISTVPGPHFGLGLEAYATWTSPIRKYGDMVNHRLLKAMITGQQAEKPQEEITVQLAERRRLNRMAERDVGDWLYARYLQPQAGTDTRFTAEIIDITRGGLRVRLLDNGAVAFIPAPFIHAVRDEVVCSQETGTVQIKGETVYSQSDKIEVRIAEVRMETRNVIARPVA</sequence>
<comment type="function">
    <text evidence="2">Involved in mRNA degradation. Hydrolyzes single-stranded polyribonucleotides processively in the 3' to 5' direction.</text>
</comment>
<comment type="catalytic activity">
    <reaction evidence="2">
        <text>Exonucleolytic cleavage in the 3'- to 5'-direction to yield nucleoside 5'-phosphates.</text>
        <dbReference type="EC" id="3.1.13.1"/>
    </reaction>
</comment>
<comment type="subcellular location">
    <subcellularLocation>
        <location evidence="2">Cytoplasm</location>
    </subcellularLocation>
</comment>
<comment type="similarity">
    <text evidence="2">Belongs to the RNR ribonuclease family. RNase II subfamily.</text>
</comment>
<name>RNB_YERPG</name>